<keyword id="KW-0067">ATP-binding</keyword>
<keyword id="KW-0173">Coenzyme A biosynthesis</keyword>
<keyword id="KW-0963">Cytoplasm</keyword>
<keyword id="KW-0418">Kinase</keyword>
<keyword id="KW-0479">Metal-binding</keyword>
<keyword id="KW-0547">Nucleotide-binding</keyword>
<keyword id="KW-0630">Potassium</keyword>
<keyword id="KW-1185">Reference proteome</keyword>
<keyword id="KW-0808">Transferase</keyword>
<reference key="1">
    <citation type="submission" date="2007-03" db="EMBL/GenBank/DDBJ databases">
        <title>Genome sequence of Rhodospirillum centenum.</title>
        <authorList>
            <person name="Touchman J.W."/>
            <person name="Bauer C."/>
            <person name="Blankenship R.E."/>
        </authorList>
    </citation>
    <scope>NUCLEOTIDE SEQUENCE [LARGE SCALE GENOMIC DNA]</scope>
    <source>
        <strain>ATCC 51521 / SW</strain>
    </source>
</reference>
<comment type="function">
    <text evidence="1">Catalyzes the phosphorylation of pantothenate (Pan), the first step in CoA biosynthesis.</text>
</comment>
<comment type="catalytic activity">
    <reaction evidence="1">
        <text>(R)-pantothenate + ATP = (R)-4'-phosphopantothenate + ADP + H(+)</text>
        <dbReference type="Rhea" id="RHEA:16373"/>
        <dbReference type="ChEBI" id="CHEBI:10986"/>
        <dbReference type="ChEBI" id="CHEBI:15378"/>
        <dbReference type="ChEBI" id="CHEBI:29032"/>
        <dbReference type="ChEBI" id="CHEBI:30616"/>
        <dbReference type="ChEBI" id="CHEBI:456216"/>
        <dbReference type="EC" id="2.7.1.33"/>
    </reaction>
</comment>
<comment type="cofactor">
    <cofactor evidence="1">
        <name>NH4(+)</name>
        <dbReference type="ChEBI" id="CHEBI:28938"/>
    </cofactor>
    <cofactor evidence="1">
        <name>K(+)</name>
        <dbReference type="ChEBI" id="CHEBI:29103"/>
    </cofactor>
    <text evidence="1">A monovalent cation. Ammonium or potassium.</text>
</comment>
<comment type="pathway">
    <text evidence="1">Cofactor biosynthesis; coenzyme A biosynthesis; CoA from (R)-pantothenate: step 1/5.</text>
</comment>
<comment type="subunit">
    <text evidence="1">Homodimer.</text>
</comment>
<comment type="subcellular location">
    <subcellularLocation>
        <location evidence="1">Cytoplasm</location>
    </subcellularLocation>
</comment>
<comment type="similarity">
    <text evidence="1">Belongs to the type III pantothenate kinase family.</text>
</comment>
<feature type="chain" id="PRO_1000140255" description="Type III pantothenate kinase">
    <location>
        <begin position="1"/>
        <end position="261"/>
    </location>
</feature>
<feature type="active site" description="Proton acceptor" evidence="1">
    <location>
        <position position="110"/>
    </location>
</feature>
<feature type="binding site" evidence="1">
    <location>
        <begin position="6"/>
        <end position="13"/>
    </location>
    <ligand>
        <name>ATP</name>
        <dbReference type="ChEBI" id="CHEBI:30616"/>
    </ligand>
</feature>
<feature type="binding site" evidence="1">
    <location>
        <begin position="108"/>
        <end position="111"/>
    </location>
    <ligand>
        <name>substrate</name>
    </ligand>
</feature>
<feature type="binding site" evidence="1">
    <location>
        <position position="130"/>
    </location>
    <ligand>
        <name>K(+)</name>
        <dbReference type="ChEBI" id="CHEBI:29103"/>
    </ligand>
</feature>
<feature type="binding site" evidence="1">
    <location>
        <position position="133"/>
    </location>
    <ligand>
        <name>ATP</name>
        <dbReference type="ChEBI" id="CHEBI:30616"/>
    </ligand>
</feature>
<feature type="binding site" evidence="1">
    <location>
        <position position="185"/>
    </location>
    <ligand>
        <name>substrate</name>
    </ligand>
</feature>
<evidence type="ECO:0000255" key="1">
    <source>
        <dbReference type="HAMAP-Rule" id="MF_01274"/>
    </source>
</evidence>
<protein>
    <recommendedName>
        <fullName evidence="1">Type III pantothenate kinase</fullName>
        <ecNumber evidence="1">2.7.1.33</ecNumber>
    </recommendedName>
    <alternativeName>
        <fullName evidence="1">PanK-III</fullName>
    </alternativeName>
    <alternativeName>
        <fullName evidence="1">Pantothenic acid kinase</fullName>
    </alternativeName>
</protein>
<proteinExistence type="inferred from homology"/>
<gene>
    <name evidence="1" type="primary">coaX</name>
    <name type="ordered locus">RC1_1225</name>
</gene>
<name>COAX_RHOCS</name>
<dbReference type="EC" id="2.7.1.33" evidence="1"/>
<dbReference type="EMBL" id="CP000613">
    <property type="protein sequence ID" value="ACI98637.1"/>
    <property type="molecule type" value="Genomic_DNA"/>
</dbReference>
<dbReference type="RefSeq" id="WP_012566425.1">
    <property type="nucleotide sequence ID" value="NC_011420.2"/>
</dbReference>
<dbReference type="SMR" id="B6ISW6"/>
<dbReference type="STRING" id="414684.RC1_1225"/>
<dbReference type="KEGG" id="rce:RC1_1225"/>
<dbReference type="eggNOG" id="COG1521">
    <property type="taxonomic scope" value="Bacteria"/>
</dbReference>
<dbReference type="HOGENOM" id="CLU_066627_1_0_5"/>
<dbReference type="OrthoDB" id="9804707at2"/>
<dbReference type="UniPathway" id="UPA00241">
    <property type="reaction ID" value="UER00352"/>
</dbReference>
<dbReference type="Proteomes" id="UP000001591">
    <property type="component" value="Chromosome"/>
</dbReference>
<dbReference type="GO" id="GO:0005737">
    <property type="term" value="C:cytoplasm"/>
    <property type="evidence" value="ECO:0007669"/>
    <property type="project" value="UniProtKB-SubCell"/>
</dbReference>
<dbReference type="GO" id="GO:0005524">
    <property type="term" value="F:ATP binding"/>
    <property type="evidence" value="ECO:0007669"/>
    <property type="project" value="UniProtKB-UniRule"/>
</dbReference>
<dbReference type="GO" id="GO:0046872">
    <property type="term" value="F:metal ion binding"/>
    <property type="evidence" value="ECO:0007669"/>
    <property type="project" value="UniProtKB-KW"/>
</dbReference>
<dbReference type="GO" id="GO:0004594">
    <property type="term" value="F:pantothenate kinase activity"/>
    <property type="evidence" value="ECO:0007669"/>
    <property type="project" value="UniProtKB-UniRule"/>
</dbReference>
<dbReference type="GO" id="GO:0015937">
    <property type="term" value="P:coenzyme A biosynthetic process"/>
    <property type="evidence" value="ECO:0007669"/>
    <property type="project" value="UniProtKB-UniRule"/>
</dbReference>
<dbReference type="CDD" id="cd24015">
    <property type="entry name" value="ASKHA_NBD_PanK-III"/>
    <property type="match status" value="1"/>
</dbReference>
<dbReference type="Gene3D" id="3.30.420.40">
    <property type="match status" value="2"/>
</dbReference>
<dbReference type="HAMAP" id="MF_01274">
    <property type="entry name" value="Pantothen_kinase_3"/>
    <property type="match status" value="1"/>
</dbReference>
<dbReference type="InterPro" id="IPR043129">
    <property type="entry name" value="ATPase_NBD"/>
</dbReference>
<dbReference type="InterPro" id="IPR004619">
    <property type="entry name" value="Type_III_PanK"/>
</dbReference>
<dbReference type="NCBIfam" id="TIGR00671">
    <property type="entry name" value="baf"/>
    <property type="match status" value="1"/>
</dbReference>
<dbReference type="NCBIfam" id="NF009844">
    <property type="entry name" value="PRK13318.1-2"/>
    <property type="match status" value="1"/>
</dbReference>
<dbReference type="NCBIfam" id="NF009848">
    <property type="entry name" value="PRK13318.1-6"/>
    <property type="match status" value="1"/>
</dbReference>
<dbReference type="NCBIfam" id="NF009855">
    <property type="entry name" value="PRK13321.1"/>
    <property type="match status" value="1"/>
</dbReference>
<dbReference type="PANTHER" id="PTHR34265">
    <property type="entry name" value="TYPE III PANTOTHENATE KINASE"/>
    <property type="match status" value="1"/>
</dbReference>
<dbReference type="PANTHER" id="PTHR34265:SF1">
    <property type="entry name" value="TYPE III PANTOTHENATE KINASE"/>
    <property type="match status" value="1"/>
</dbReference>
<dbReference type="Pfam" id="PF03309">
    <property type="entry name" value="Pan_kinase"/>
    <property type="match status" value="1"/>
</dbReference>
<dbReference type="SUPFAM" id="SSF53067">
    <property type="entry name" value="Actin-like ATPase domain"/>
    <property type="match status" value="2"/>
</dbReference>
<accession>B6ISW6</accession>
<sequence length="261" mass="27443">MLLAIDAGNTNVVFAVFEGDVKRGQWRVSTDGRRTADEHAVWLVALMAMKGLTPKDIHAAILSSVVPAQTGPLTTLCEEHFGCTPMRVGDPGVRLGLEVRIDNPKEAGADRLVNAVAAVATYPPPLVVIDIGTGTTFDVVDANGDFAGGVIAPGPVLSLDALHRVAAQLPKVDILRPDRVIGKGTVAAMQSGMFWGYTGMIEGILTRIKAELSPTGDPPVTVIGTGGLVRLFAEGSSLVDAIDADLTLRGLRLIHQRNAAR</sequence>
<organism>
    <name type="scientific">Rhodospirillum centenum (strain ATCC 51521 / SW)</name>
    <dbReference type="NCBI Taxonomy" id="414684"/>
    <lineage>
        <taxon>Bacteria</taxon>
        <taxon>Pseudomonadati</taxon>
        <taxon>Pseudomonadota</taxon>
        <taxon>Alphaproteobacteria</taxon>
        <taxon>Rhodospirillales</taxon>
        <taxon>Rhodospirillaceae</taxon>
        <taxon>Rhodospirillum</taxon>
    </lineage>
</organism>